<keyword id="KW-0025">Alternative splicing</keyword>
<keyword id="KW-0539">Nucleus</keyword>
<keyword id="KW-1267">Proteomics identification</keyword>
<keyword id="KW-1185">Reference proteome</keyword>
<accession>Q7L0X2</accession>
<accession>Q8N9Y8</accession>
<accession>Q8NCQ6</accession>
<accession>Q8NCZ6</accession>
<reference key="1">
    <citation type="journal article" date="2004" name="Genome Res.">
        <title>The status, quality, and expansion of the NIH full-length cDNA project: the Mammalian Gene Collection (MGC).</title>
        <authorList>
            <consortium name="The MGC Project Team"/>
        </authorList>
    </citation>
    <scope>NUCLEOTIDE SEQUENCE [LARGE SCALE MRNA] (ISOFORMS 1 AND 3)</scope>
    <source>
        <tissue>Testis</tissue>
    </source>
</reference>
<reference key="2">
    <citation type="journal article" date="2004" name="Nat. Genet.">
        <title>Complete sequencing and characterization of 21,243 full-length human cDNAs.</title>
        <authorList>
            <person name="Ota T."/>
            <person name="Suzuki Y."/>
            <person name="Nishikawa T."/>
            <person name="Otsuki T."/>
            <person name="Sugiyama T."/>
            <person name="Irie R."/>
            <person name="Wakamatsu A."/>
            <person name="Hayashi K."/>
            <person name="Sato H."/>
            <person name="Nagai K."/>
            <person name="Kimura K."/>
            <person name="Makita H."/>
            <person name="Sekine M."/>
            <person name="Obayashi M."/>
            <person name="Nishi T."/>
            <person name="Shibahara T."/>
            <person name="Tanaka T."/>
            <person name="Ishii S."/>
            <person name="Yamamoto J."/>
            <person name="Saito K."/>
            <person name="Kawai Y."/>
            <person name="Isono Y."/>
            <person name="Nakamura Y."/>
            <person name="Nagahari K."/>
            <person name="Murakami K."/>
            <person name="Yasuda T."/>
            <person name="Iwayanagi T."/>
            <person name="Wagatsuma M."/>
            <person name="Shiratori A."/>
            <person name="Sudo H."/>
            <person name="Hosoiri T."/>
            <person name="Kaku Y."/>
            <person name="Kodaira H."/>
            <person name="Kondo H."/>
            <person name="Sugawara M."/>
            <person name="Takahashi M."/>
            <person name="Kanda K."/>
            <person name="Yokoi T."/>
            <person name="Furuya T."/>
            <person name="Kikkawa E."/>
            <person name="Omura Y."/>
            <person name="Abe K."/>
            <person name="Kamihara K."/>
            <person name="Katsuta N."/>
            <person name="Sato K."/>
            <person name="Tanikawa M."/>
            <person name="Yamazaki M."/>
            <person name="Ninomiya K."/>
            <person name="Ishibashi T."/>
            <person name="Yamashita H."/>
            <person name="Murakawa K."/>
            <person name="Fujimori K."/>
            <person name="Tanai H."/>
            <person name="Kimata M."/>
            <person name="Watanabe M."/>
            <person name="Hiraoka S."/>
            <person name="Chiba Y."/>
            <person name="Ishida S."/>
            <person name="Ono Y."/>
            <person name="Takiguchi S."/>
            <person name="Watanabe S."/>
            <person name="Yosida M."/>
            <person name="Hotuta T."/>
            <person name="Kusano J."/>
            <person name="Kanehori K."/>
            <person name="Takahashi-Fujii A."/>
            <person name="Hara H."/>
            <person name="Tanase T.-O."/>
            <person name="Nomura Y."/>
            <person name="Togiya S."/>
            <person name="Komai F."/>
            <person name="Hara R."/>
            <person name="Takeuchi K."/>
            <person name="Arita M."/>
            <person name="Imose N."/>
            <person name="Musashino K."/>
            <person name="Yuuki H."/>
            <person name="Oshima A."/>
            <person name="Sasaki N."/>
            <person name="Aotsuka S."/>
            <person name="Yoshikawa Y."/>
            <person name="Matsunawa H."/>
            <person name="Ichihara T."/>
            <person name="Shiohata N."/>
            <person name="Sano S."/>
            <person name="Moriya S."/>
            <person name="Momiyama H."/>
            <person name="Satoh N."/>
            <person name="Takami S."/>
            <person name="Terashima Y."/>
            <person name="Suzuki O."/>
            <person name="Nakagawa S."/>
            <person name="Senoh A."/>
            <person name="Mizoguchi H."/>
            <person name="Goto Y."/>
            <person name="Shimizu F."/>
            <person name="Wakebe H."/>
            <person name="Hishigaki H."/>
            <person name="Watanabe T."/>
            <person name="Sugiyama A."/>
            <person name="Takemoto M."/>
            <person name="Kawakami B."/>
            <person name="Yamazaki M."/>
            <person name="Watanabe K."/>
            <person name="Kumagai A."/>
            <person name="Itakura S."/>
            <person name="Fukuzumi Y."/>
            <person name="Fujimori Y."/>
            <person name="Komiyama M."/>
            <person name="Tashiro H."/>
            <person name="Tanigami A."/>
            <person name="Fujiwara T."/>
            <person name="Ono T."/>
            <person name="Yamada K."/>
            <person name="Fujii Y."/>
            <person name="Ozaki K."/>
            <person name="Hirao M."/>
            <person name="Ohmori Y."/>
            <person name="Kawabata A."/>
            <person name="Hikiji T."/>
            <person name="Kobatake N."/>
            <person name="Inagaki H."/>
            <person name="Ikema Y."/>
            <person name="Okamoto S."/>
            <person name="Okitani R."/>
            <person name="Kawakami T."/>
            <person name="Noguchi S."/>
            <person name="Itoh T."/>
            <person name="Shigeta K."/>
            <person name="Senba T."/>
            <person name="Matsumura K."/>
            <person name="Nakajima Y."/>
            <person name="Mizuno T."/>
            <person name="Morinaga M."/>
            <person name="Sasaki M."/>
            <person name="Togashi T."/>
            <person name="Oyama M."/>
            <person name="Hata H."/>
            <person name="Watanabe M."/>
            <person name="Komatsu T."/>
            <person name="Mizushima-Sugano J."/>
            <person name="Satoh T."/>
            <person name="Shirai Y."/>
            <person name="Takahashi Y."/>
            <person name="Nakagawa K."/>
            <person name="Okumura K."/>
            <person name="Nagase T."/>
            <person name="Nomura N."/>
            <person name="Kikuchi H."/>
            <person name="Masuho Y."/>
            <person name="Yamashita R."/>
            <person name="Nakai K."/>
            <person name="Yada T."/>
            <person name="Nakamura Y."/>
            <person name="Ohara O."/>
            <person name="Isogai T."/>
            <person name="Sugano S."/>
        </authorList>
    </citation>
    <scope>NUCLEOTIDE SEQUENCE [LARGE SCALE MRNA] OF 1-608 (ISOFORM 2)</scope>
    <source>
        <tissue>Testis</tissue>
    </source>
</reference>
<reference key="3">
    <citation type="journal article" date="2007" name="BMC Genomics">
        <title>The full-ORF clone resource of the German cDNA consortium.</title>
        <authorList>
            <person name="Bechtel S."/>
            <person name="Rosenfelder H."/>
            <person name="Duda A."/>
            <person name="Schmidt C.P."/>
            <person name="Ernst U."/>
            <person name="Wellenreuther R."/>
            <person name="Mehrle A."/>
            <person name="Schuster C."/>
            <person name="Bahr A."/>
            <person name="Bloecker H."/>
            <person name="Heubner D."/>
            <person name="Hoerlein A."/>
            <person name="Michel G."/>
            <person name="Wedler H."/>
            <person name="Koehrer K."/>
            <person name="Ottenwaelder B."/>
            <person name="Poustka A."/>
            <person name="Wiemann S."/>
            <person name="Schupp I."/>
        </authorList>
    </citation>
    <scope>NUCLEOTIDE SEQUENCE [LARGE SCALE MRNA] OF 256-663 (ISOFORMS 1/2/3)</scope>
    <source>
        <tissue>Testis</tissue>
    </source>
</reference>
<reference key="4">
    <citation type="journal article" date="2019" name="J. Proteome Res.">
        <title>Cell Type-Specific Expression of Testis Elevated Genes Based on Transcriptomics and Antibody-Based Proteomics.</title>
        <authorList>
            <person name="Pineau C."/>
            <person name="Hikmet F."/>
            <person name="Zhang C."/>
            <person name="Oksvold P."/>
            <person name="Chen S."/>
            <person name="Fagerberg L."/>
            <person name="Uhlen M."/>
            <person name="Lindskog C."/>
        </authorList>
    </citation>
    <scope>SUBCELLULAR LOCATION</scope>
</reference>
<gene>
    <name type="primary">ERICH6</name>
    <name type="synonym">C3orf44</name>
    <name type="synonym">FAM194A</name>
</gene>
<name>ERIP6_HUMAN</name>
<evidence type="ECO:0000256" key="1">
    <source>
        <dbReference type="SAM" id="MobiDB-lite"/>
    </source>
</evidence>
<evidence type="ECO:0000269" key="2">
    <source>
    </source>
</evidence>
<evidence type="ECO:0000303" key="3">
    <source>
    </source>
</evidence>
<evidence type="ECO:0000303" key="4">
    <source>
    </source>
</evidence>
<evidence type="ECO:0000305" key="5"/>
<comment type="subcellular location">
    <subcellularLocation>
        <location evidence="2">Nucleus</location>
    </subcellularLocation>
</comment>
<comment type="alternative products">
    <event type="alternative splicing"/>
    <isoform>
        <id>Q7L0X2-1</id>
        <name>1</name>
        <sequence type="displayed"/>
    </isoform>
    <isoform>
        <id>Q7L0X2-2</id>
        <name>2</name>
        <sequence type="described" ref="VSP_026313"/>
    </isoform>
    <isoform>
        <id>Q7L0X2-3</id>
        <name>3</name>
        <sequence type="described" ref="VSP_026312"/>
    </isoform>
</comment>
<comment type="similarity">
    <text evidence="5">Belongs to the ERICH6 family.</text>
</comment>
<organism>
    <name type="scientific">Homo sapiens</name>
    <name type="common">Human</name>
    <dbReference type="NCBI Taxonomy" id="9606"/>
    <lineage>
        <taxon>Eukaryota</taxon>
        <taxon>Metazoa</taxon>
        <taxon>Chordata</taxon>
        <taxon>Craniata</taxon>
        <taxon>Vertebrata</taxon>
        <taxon>Euteleostomi</taxon>
        <taxon>Mammalia</taxon>
        <taxon>Eutheria</taxon>
        <taxon>Euarchontoglires</taxon>
        <taxon>Primates</taxon>
        <taxon>Haplorrhini</taxon>
        <taxon>Catarrhini</taxon>
        <taxon>Hominidae</taxon>
        <taxon>Homo</taxon>
    </lineage>
</organism>
<proteinExistence type="evidence at protein level"/>
<protein>
    <recommendedName>
        <fullName>Glutamate-rich protein 6</fullName>
    </recommendedName>
    <alternativeName>
        <fullName>Protein FAM194A</fullName>
    </alternativeName>
</protein>
<sequence length="663" mass="75255">MAHLRSPSGFGDPGKKDQKESEEELEEEEEEEEVEEEEEEVEEEEEEVEEEEEEVVEEELVGEEQELEAPETFSEEYLWKVTDIGDYDDDFPDVRPRLASIVSPSLTSTFVPSQSATSTETPSASPPSSTSSHKSFPKIFQTFRKDMSEMSIDRNIHRNLSPGIPVSVQTEESWLQDLSDKVQSRKKASKEKAEPECLASKLREKWVINPEESKLNILYELEFKEDFITLFEPSLRTLPSIGPPSILAYKEESSNLGINFKDEEEETSPKCEFCGSDLRAFFSNVDVSSEPKGHASCCIAFQNLIDYIYEEQIKTKPPKAELIAIDPHAAHGSEVDRLKAKEKALQRKQEQRMARHFAIISREQTHFSEDDSKRLKTISYQLSVDIPEKQIIDDIVFDFQLRNSNMSIICCDSRIACGKVVRNELLEKHYKHGSKFLTSFPDGTTQIFYPSGNLAIIRVPNKVNGFTCIVQEDMPTNPAILAVLDSSGRSSCYHPNGNVWVYINILGGQYSDQAGNRIRAWNWSNSITSSPFVSFKPVFLALNRYIGVRILEQDKISITFLAMGQQARISVGTKVKLPNPEEIPILRYVSGDDLLLLASLIKIRRLFHKLEGCVNFPSSQVWEKLKQPSYLSSLSLKLIALCHSSGIKQDIMKTIRNIINEEI</sequence>
<dbReference type="EMBL" id="BC029577">
    <property type="protein sequence ID" value="AAH29577.1"/>
    <property type="molecule type" value="mRNA"/>
</dbReference>
<dbReference type="EMBL" id="BC036239">
    <property type="protein sequence ID" value="AAH36239.2"/>
    <property type="molecule type" value="mRNA"/>
</dbReference>
<dbReference type="EMBL" id="AK093375">
    <property type="protein sequence ID" value="BAC04146.1"/>
    <property type="molecule type" value="mRNA"/>
</dbReference>
<dbReference type="EMBL" id="AL834214">
    <property type="protein sequence ID" value="CAD38896.2"/>
    <property type="molecule type" value="mRNA"/>
</dbReference>
<dbReference type="CCDS" id="CCDS3151.2">
    <molecule id="Q7L0X2-1"/>
</dbReference>
<dbReference type="CCDS" id="CCDS77840.1">
    <molecule id="Q7L0X2-3"/>
</dbReference>
<dbReference type="RefSeq" id="NP_001295163.1">
    <molecule id="Q7L0X2-3"/>
    <property type="nucleotide sequence ID" value="NM_001308234.2"/>
</dbReference>
<dbReference type="RefSeq" id="NP_689607.2">
    <molecule id="Q7L0X2-1"/>
    <property type="nucleotide sequence ID" value="NM_152394.5"/>
</dbReference>
<dbReference type="BioGRID" id="126294">
    <property type="interactions" value="19"/>
</dbReference>
<dbReference type="FunCoup" id="Q7L0X2">
    <property type="interactions" value="9"/>
</dbReference>
<dbReference type="IntAct" id="Q7L0X2">
    <property type="interactions" value="2"/>
</dbReference>
<dbReference type="STRING" id="9606.ENSP00000295910"/>
<dbReference type="GlyGen" id="Q7L0X2">
    <property type="glycosylation" value="1 site, 1 O-linked glycan (1 site)"/>
</dbReference>
<dbReference type="iPTMnet" id="Q7L0X2"/>
<dbReference type="PhosphoSitePlus" id="Q7L0X2"/>
<dbReference type="BioMuta" id="ERICH6"/>
<dbReference type="DMDM" id="121944419"/>
<dbReference type="jPOST" id="Q7L0X2"/>
<dbReference type="MassIVE" id="Q7L0X2"/>
<dbReference type="PaxDb" id="9606-ENSP00000295910"/>
<dbReference type="PeptideAtlas" id="Q7L0X2"/>
<dbReference type="ProteomicsDB" id="68738">
    <molecule id="Q7L0X2-1"/>
</dbReference>
<dbReference type="ProteomicsDB" id="68739">
    <molecule id="Q7L0X2-2"/>
</dbReference>
<dbReference type="Antibodypedia" id="62352">
    <property type="antibodies" value="6 antibodies from 6 providers"/>
</dbReference>
<dbReference type="DNASU" id="131831"/>
<dbReference type="Ensembl" id="ENST00000295910.11">
    <molecule id="Q7L0X2-1"/>
    <property type="protein sequence ID" value="ENSP00000295910.6"/>
    <property type="gene ID" value="ENSG00000163645.15"/>
</dbReference>
<dbReference type="Ensembl" id="ENST00000491361.5">
    <molecule id="Q7L0X2-3"/>
    <property type="protein sequence ID" value="ENSP00000419366.1"/>
    <property type="gene ID" value="ENSG00000163645.15"/>
</dbReference>
<dbReference type="GeneID" id="131831"/>
<dbReference type="KEGG" id="hsa:131831"/>
<dbReference type="MANE-Select" id="ENST00000295910.11">
    <property type="protein sequence ID" value="ENSP00000295910.6"/>
    <property type="RefSeq nucleotide sequence ID" value="NM_152394.5"/>
    <property type="RefSeq protein sequence ID" value="NP_689607.2"/>
</dbReference>
<dbReference type="UCSC" id="uc003eyg.4">
    <molecule id="Q7L0X2-1"/>
    <property type="organism name" value="human"/>
</dbReference>
<dbReference type="AGR" id="HGNC:28602"/>
<dbReference type="CTD" id="131831"/>
<dbReference type="GeneCards" id="ERICH6"/>
<dbReference type="HGNC" id="HGNC:28602">
    <property type="gene designation" value="ERICH6"/>
</dbReference>
<dbReference type="HPA" id="ENSG00000163645">
    <property type="expression patterns" value="Tissue enriched (testis)"/>
</dbReference>
<dbReference type="neXtProt" id="NX_Q7L0X2"/>
<dbReference type="OpenTargets" id="ENSG00000163645"/>
<dbReference type="PharmGKB" id="PA165697300"/>
<dbReference type="VEuPathDB" id="HostDB:ENSG00000163645"/>
<dbReference type="eggNOG" id="ENOG502QUAE">
    <property type="taxonomic scope" value="Eukaryota"/>
</dbReference>
<dbReference type="GeneTree" id="ENSGT00940000153655"/>
<dbReference type="HOGENOM" id="CLU_030265_0_0_1"/>
<dbReference type="InParanoid" id="Q7L0X2"/>
<dbReference type="OMA" id="CCSYFQN"/>
<dbReference type="OrthoDB" id="527209at2759"/>
<dbReference type="PAN-GO" id="Q7L0X2">
    <property type="GO annotations" value="0 GO annotations based on evolutionary models"/>
</dbReference>
<dbReference type="PhylomeDB" id="Q7L0X2"/>
<dbReference type="TreeFam" id="TF350393"/>
<dbReference type="PathwayCommons" id="Q7L0X2"/>
<dbReference type="SignaLink" id="Q7L0X2"/>
<dbReference type="BioGRID-ORCS" id="131831">
    <property type="hits" value="14 hits in 1140 CRISPR screens"/>
</dbReference>
<dbReference type="GenomeRNAi" id="131831"/>
<dbReference type="Pharos" id="Q7L0X2">
    <property type="development level" value="Tdark"/>
</dbReference>
<dbReference type="PRO" id="PR:Q7L0X2"/>
<dbReference type="Proteomes" id="UP000005640">
    <property type="component" value="Chromosome 3"/>
</dbReference>
<dbReference type="RNAct" id="Q7L0X2">
    <property type="molecule type" value="protein"/>
</dbReference>
<dbReference type="Bgee" id="ENSG00000163645">
    <property type="expression patterns" value="Expressed in right testis and 112 other cell types or tissues"/>
</dbReference>
<dbReference type="ExpressionAtlas" id="Q7L0X2">
    <property type="expression patterns" value="baseline and differential"/>
</dbReference>
<dbReference type="GO" id="GO:0005634">
    <property type="term" value="C:nucleus"/>
    <property type="evidence" value="ECO:0000314"/>
    <property type="project" value="UniProtKB"/>
</dbReference>
<dbReference type="InterPro" id="IPR029281">
    <property type="entry name" value="FAM194_C"/>
</dbReference>
<dbReference type="PANTHER" id="PTHR23093:SF11">
    <property type="entry name" value="GLUTAMATE-RICH PROTEIN 6"/>
    <property type="match status" value="1"/>
</dbReference>
<dbReference type="PANTHER" id="PTHR23093">
    <property type="entry name" value="SIMILAR TO CHROMOSOME 3 OPEN READING FRAME 20"/>
    <property type="match status" value="1"/>
</dbReference>
<dbReference type="Pfam" id="PF14977">
    <property type="entry name" value="FAM194"/>
    <property type="match status" value="1"/>
</dbReference>
<feature type="chain" id="PRO_0000291924" description="Glutamate-rich protein 6">
    <location>
        <begin position="1"/>
        <end position="663"/>
    </location>
</feature>
<feature type="region of interest" description="Disordered" evidence="1">
    <location>
        <begin position="1"/>
        <end position="74"/>
    </location>
</feature>
<feature type="region of interest" description="Disordered" evidence="1">
    <location>
        <begin position="106"/>
        <end position="136"/>
    </location>
</feature>
<feature type="compositionally biased region" description="Acidic residues" evidence="1">
    <location>
        <begin position="20"/>
        <end position="69"/>
    </location>
</feature>
<feature type="compositionally biased region" description="Low complexity" evidence="1">
    <location>
        <begin position="112"/>
        <end position="132"/>
    </location>
</feature>
<feature type="splice variant" id="VSP_026312" description="In isoform 3." evidence="4">
    <location>
        <begin position="1"/>
        <end position="146"/>
    </location>
</feature>
<feature type="splice variant" id="VSP_026313" description="In isoform 2." evidence="3">
    <location>
        <begin position="22"/>
        <end position="63"/>
    </location>
</feature>
<feature type="sequence variant" id="VAR_032893" description="In dbSNP:rs16862795.">
    <original>G</original>
    <variation>V</variation>
    <location>
        <position position="9"/>
    </location>
</feature>
<feature type="sequence variant" id="VAR_032894" description="In dbSNP:rs11919896.">
    <original>G</original>
    <variation>R</variation>
    <location>
        <position position="433"/>
    </location>
</feature>
<feature type="sequence variant" id="VAR_062240" description="In dbSNP:rs34137455.">
    <original>R</original>
    <variation>H</variation>
    <location>
        <position position="604"/>
    </location>
</feature>